<protein>
    <recommendedName>
        <fullName evidence="1">Small ribosomal subunit protein uS11</fullName>
    </recommendedName>
    <alternativeName>
        <fullName evidence="2">30S ribosomal protein S11</fullName>
    </alternativeName>
</protein>
<proteinExistence type="inferred from homology"/>
<name>RS11_BIFA0</name>
<gene>
    <name evidence="1" type="primary">rpsK</name>
    <name type="ordered locus">BLA_0386</name>
</gene>
<organism>
    <name type="scientific">Bifidobacterium animalis subsp. lactis (strain AD011)</name>
    <dbReference type="NCBI Taxonomy" id="442563"/>
    <lineage>
        <taxon>Bacteria</taxon>
        <taxon>Bacillati</taxon>
        <taxon>Actinomycetota</taxon>
        <taxon>Actinomycetes</taxon>
        <taxon>Bifidobacteriales</taxon>
        <taxon>Bifidobacteriaceae</taxon>
        <taxon>Bifidobacterium</taxon>
    </lineage>
</organism>
<sequence>MAAQKQAARKTRRRDRKSIPVGQAHIKSTFNNTIISITDPSGAVVSWASGGDVGFKGSRKSTPYAAGMAAESAARKAMEHGVKKVDVFVKGPGSGRETAIRSLQSAGLEVGSITDVTPQAFNGVRPPKRRRV</sequence>
<evidence type="ECO:0000255" key="1">
    <source>
        <dbReference type="HAMAP-Rule" id="MF_01310"/>
    </source>
</evidence>
<evidence type="ECO:0000305" key="2"/>
<feature type="chain" id="PRO_1000165531" description="Small ribosomal subunit protein uS11">
    <location>
        <begin position="1"/>
        <end position="132"/>
    </location>
</feature>
<comment type="function">
    <text evidence="1">Located on the platform of the 30S subunit, it bridges several disparate RNA helices of the 16S rRNA. Forms part of the Shine-Dalgarno cleft in the 70S ribosome.</text>
</comment>
<comment type="subunit">
    <text evidence="1">Part of the 30S ribosomal subunit. Interacts with proteins S7 and S18. Binds to IF-3.</text>
</comment>
<comment type="similarity">
    <text evidence="1">Belongs to the universal ribosomal protein uS11 family.</text>
</comment>
<reference key="1">
    <citation type="journal article" date="2009" name="J. Bacteriol.">
        <title>Genome sequence of the probiotic bacterium Bifidobacterium animalis subsp. lactis AD011.</title>
        <authorList>
            <person name="Kim J.F."/>
            <person name="Jeong H."/>
            <person name="Yu D.S."/>
            <person name="Choi S.-H."/>
            <person name="Hur C.-G."/>
            <person name="Park M.-S."/>
            <person name="Yoon S.H."/>
            <person name="Kim D.-W."/>
            <person name="Ji G.E."/>
            <person name="Park H.-S."/>
            <person name="Oh T.K."/>
        </authorList>
    </citation>
    <scope>NUCLEOTIDE SEQUENCE [LARGE SCALE GENOMIC DNA]</scope>
    <source>
        <strain>AD011</strain>
    </source>
</reference>
<accession>B8DW37</accession>
<dbReference type="EMBL" id="CP001213">
    <property type="protein sequence ID" value="ACL28688.1"/>
    <property type="molecule type" value="Genomic_DNA"/>
</dbReference>
<dbReference type="RefSeq" id="WP_004268616.1">
    <property type="nucleotide sequence ID" value="NC_011835.1"/>
</dbReference>
<dbReference type="SMR" id="B8DW37"/>
<dbReference type="STRING" id="442563.BLA_0386"/>
<dbReference type="GeneID" id="89493852"/>
<dbReference type="KEGG" id="bla:BLA_0386"/>
<dbReference type="HOGENOM" id="CLU_072439_5_0_11"/>
<dbReference type="Proteomes" id="UP000002456">
    <property type="component" value="Chromosome"/>
</dbReference>
<dbReference type="GO" id="GO:1990904">
    <property type="term" value="C:ribonucleoprotein complex"/>
    <property type="evidence" value="ECO:0007669"/>
    <property type="project" value="UniProtKB-KW"/>
</dbReference>
<dbReference type="GO" id="GO:0005840">
    <property type="term" value="C:ribosome"/>
    <property type="evidence" value="ECO:0007669"/>
    <property type="project" value="UniProtKB-KW"/>
</dbReference>
<dbReference type="GO" id="GO:0019843">
    <property type="term" value="F:rRNA binding"/>
    <property type="evidence" value="ECO:0007669"/>
    <property type="project" value="UniProtKB-UniRule"/>
</dbReference>
<dbReference type="GO" id="GO:0003735">
    <property type="term" value="F:structural constituent of ribosome"/>
    <property type="evidence" value="ECO:0007669"/>
    <property type="project" value="InterPro"/>
</dbReference>
<dbReference type="GO" id="GO:0006412">
    <property type="term" value="P:translation"/>
    <property type="evidence" value="ECO:0007669"/>
    <property type="project" value="UniProtKB-UniRule"/>
</dbReference>
<dbReference type="FunFam" id="3.30.420.80:FF:000001">
    <property type="entry name" value="30S ribosomal protein S11"/>
    <property type="match status" value="1"/>
</dbReference>
<dbReference type="Gene3D" id="3.30.420.80">
    <property type="entry name" value="Ribosomal protein S11"/>
    <property type="match status" value="1"/>
</dbReference>
<dbReference type="HAMAP" id="MF_01310">
    <property type="entry name" value="Ribosomal_uS11"/>
    <property type="match status" value="1"/>
</dbReference>
<dbReference type="InterPro" id="IPR001971">
    <property type="entry name" value="Ribosomal_uS11"/>
</dbReference>
<dbReference type="InterPro" id="IPR019981">
    <property type="entry name" value="Ribosomal_uS11_bac-type"/>
</dbReference>
<dbReference type="InterPro" id="IPR018102">
    <property type="entry name" value="Ribosomal_uS11_CS"/>
</dbReference>
<dbReference type="InterPro" id="IPR036967">
    <property type="entry name" value="Ribosomal_uS11_sf"/>
</dbReference>
<dbReference type="NCBIfam" id="NF003698">
    <property type="entry name" value="PRK05309.1"/>
    <property type="match status" value="1"/>
</dbReference>
<dbReference type="NCBIfam" id="TIGR03632">
    <property type="entry name" value="uS11_bact"/>
    <property type="match status" value="1"/>
</dbReference>
<dbReference type="PANTHER" id="PTHR11759">
    <property type="entry name" value="40S RIBOSOMAL PROTEIN S14/30S RIBOSOMAL PROTEIN S11"/>
    <property type="match status" value="1"/>
</dbReference>
<dbReference type="Pfam" id="PF00411">
    <property type="entry name" value="Ribosomal_S11"/>
    <property type="match status" value="1"/>
</dbReference>
<dbReference type="PIRSF" id="PIRSF002131">
    <property type="entry name" value="Ribosomal_S11"/>
    <property type="match status" value="1"/>
</dbReference>
<dbReference type="SUPFAM" id="SSF53137">
    <property type="entry name" value="Translational machinery components"/>
    <property type="match status" value="1"/>
</dbReference>
<dbReference type="PROSITE" id="PS00054">
    <property type="entry name" value="RIBOSOMAL_S11"/>
    <property type="match status" value="1"/>
</dbReference>
<keyword id="KW-1185">Reference proteome</keyword>
<keyword id="KW-0687">Ribonucleoprotein</keyword>
<keyword id="KW-0689">Ribosomal protein</keyword>
<keyword id="KW-0694">RNA-binding</keyword>
<keyword id="KW-0699">rRNA-binding</keyword>